<comment type="function">
    <text evidence="2 4 7 12">Catalytic component of the DNA polymerase epsilon complex (PubMed:10801849). Participates in chromosomal DNA replication (By similarity). Required during synthesis of the leading DNA strands at the replication fork, binds at/or near replication origins and moves along DNA with the replication fork (By similarity). Has 3'-5' proofreading exonuclease activity that corrects errors arising during DNA replication (By similarity). Involved in DNA synthesis during DNA repair (PubMed:20227374, PubMed:27573199). Along with DNA polymerase POLD1 and DNA polymerase POLK, has a role in excision repair (NER) synthesis following UV irradiation (PubMed:20227374).</text>
</comment>
<comment type="catalytic activity">
    <reaction evidence="2">
        <text>DNA(n) + a 2'-deoxyribonucleoside 5'-triphosphate = DNA(n+1) + diphosphate</text>
        <dbReference type="Rhea" id="RHEA:22508"/>
        <dbReference type="Rhea" id="RHEA-COMP:17339"/>
        <dbReference type="Rhea" id="RHEA-COMP:17340"/>
        <dbReference type="ChEBI" id="CHEBI:33019"/>
        <dbReference type="ChEBI" id="CHEBI:61560"/>
        <dbReference type="ChEBI" id="CHEBI:173112"/>
        <dbReference type="EC" id="2.7.7.7"/>
    </reaction>
</comment>
<comment type="subunit">
    <text evidence="4 5 6">Component of the DNA polymerase epsilon complex consisting of four subunits: the catalytic subunit POLE and the accessory subunits POLE2, POLE3 and POLE4. Interacts with RAD17 and TOPBP1.</text>
</comment>
<comment type="interaction">
    <interactant intactId="EBI-348526">
        <id>Q07864</id>
    </interactant>
    <interactant intactId="EBI-348517">
        <id>O95870</id>
        <label>ABHD16A</label>
    </interactant>
    <organismsDiffer>false</organismsDiffer>
    <experiments>3</experiments>
</comment>
<comment type="interaction">
    <interactant intactId="EBI-348526">
        <id>Q07864</id>
    </interactant>
    <interactant intactId="EBI-713847">
        <id>P56282</id>
        <label>POLE2</label>
    </interactant>
    <organismsDiffer>false</organismsDiffer>
    <experiments>11</experiments>
</comment>
<comment type="subcellular location">
    <subcellularLocation>
        <location>Nucleus</location>
    </subcellularLocation>
</comment>
<comment type="domain">
    <text evidence="2">The DNA polymerase activity domain resides in the N-terminal half of the protein, while the C-terminus is necessary for maintenance of the complex.</text>
</comment>
<comment type="domain">
    <text evidence="1">The CysA-type zinc finger is required for PCNA-binding.</text>
</comment>
<comment type="domain">
    <text evidence="1">The CysB motif binds 1 4Fe-4S cluster and is required for the formation of polymerase complexes.</text>
</comment>
<comment type="disease" evidence="9 10 11 12">
    <disease id="DI-03648">
        <name>Colorectal cancer 12</name>
        <acronym>CRCS12</acronym>
        <description>A complex disease characterized by malignant lesions arising from the inner wall of the large intestine (the colon) and the rectum. Genetic alterations are often associated with progression from premalignant lesion (adenoma) to invasive adenocarcinoma. Risk factors for cancer of the colon and rectum include colon polyps, long-standing ulcerative colitis, and genetic family history. CRCS12 is characterized by a high-penetrance predisposition to the development of colorectal adenomas and carcinomas, with a variable tendency to develop multiple and large tumors. Onset is usually before age 40 years. The histologic features of the tumors are unremarkable.</description>
        <dbReference type="MIM" id="615083"/>
    </disease>
    <text>Disease susceptibility is associated with variants affecting the gene represented in this entry.</text>
</comment>
<comment type="disease" evidence="8">
    <disease id="DI-03708">
        <name>Facial dysmorphism, immunodeficiency, livedo, and short stature</name>
        <acronym>FILS</acronym>
        <description>A syndrome characterized by mild facial dysmorphism, mainly malar hypoplasia, livedo on the skin since birth, and immunodeficiency resulting in recurrent infections. Growth impairment is observed during early childhood and results in variable short stature in adulthood.</description>
        <dbReference type="MIM" id="615139"/>
    </disease>
    <text>The disease is caused by variants affecting the gene represented in this entry.</text>
</comment>
<comment type="disease" evidence="14">
    <disease id="DI-05489">
        <name>Intrauterine growth retardation, metaphyseal dysplasia, adrenal hypoplasia congenita, genital anomalies, and immunodeficiency</name>
        <acronym>IMAGEI</acronym>
        <description>An autosomal recessive disorder characterized by intrauterine growth retardation, postnatal growth failure, metaphyseal dysplasia, adrenal hypoplasia congenita, growth hormone deficiency, genital anomalies, and immunodeficiency resulting in increased infections.</description>
        <dbReference type="MIM" id="618336"/>
    </disease>
    <text>The disease is caused by variants affecting the gene represented in this entry.</text>
</comment>
<comment type="similarity">
    <text evidence="15">Belongs to the DNA polymerase type-B family.</text>
</comment>
<comment type="sequence caution" evidence="15">
    <conflict type="frameshift">
        <sequence resource="EMBL-CDS" id="AAA15448"/>
    </conflict>
</comment>
<comment type="sequence caution" evidence="15">
    <conflict type="miscellaneous discrepancy">
        <sequence resource="EMBL-CDS" id="AAA15448"/>
    </conflict>
</comment>
<name>DPOE1_HUMAN</name>
<reference key="1">
    <citation type="journal article" date="1993" name="J. Biol. Chem.">
        <title>Molecular cloning of the cDNA for the catalytic subunit of human DNA polymerase epsilon.</title>
        <authorList>
            <person name="Kesti T."/>
            <person name="Frantti H."/>
            <person name="Syvaeoja J.E."/>
        </authorList>
    </citation>
    <scope>NUCLEOTIDE SEQUENCE [MRNA]</scope>
    <scope>PROTEIN SEQUENCE OF 48-51; 876-886 AND 1338-1344</scope>
    <source>
        <tissue>T-cell</tissue>
    </source>
</reference>
<reference key="2">
    <citation type="submission" date="1998-06" db="EMBL/GenBank/DDBJ databases">
        <authorList>
            <person name="Syvaeoja J.E."/>
        </authorList>
    </citation>
    <scope>SEQUENCE REVISION</scope>
</reference>
<reference key="3">
    <citation type="submission" date="1996-02" db="EMBL/GenBank/DDBJ databases">
        <authorList>
            <person name="Asahara H."/>
            <person name="Goldsmith J.S."/>
            <person name="Lee E."/>
            <person name="Linn S."/>
        </authorList>
    </citation>
    <scope>NUCLEOTIDE SEQUENCE [MRNA]</scope>
</reference>
<reference key="4">
    <citation type="submission" date="2003-04" db="EMBL/GenBank/DDBJ databases">
        <authorList>
            <consortium name="NIEHS SNPs program"/>
        </authorList>
    </citation>
    <scope>NUCLEOTIDE SEQUENCE [GENOMIC DNA] OF 22-2286</scope>
</reference>
<reference key="5">
    <citation type="journal article" date="2000" name="J. Biol. Chem.">
        <title>Identification and cloning of two histone fold motif-containing subunits of HeLa DNA polymerase epsilon.</title>
        <authorList>
            <person name="Li Y."/>
            <person name="Pursell Z.F."/>
            <person name="Linn S."/>
        </authorList>
    </citation>
    <scope>FUNCTION</scope>
    <scope>IDENTIFICATION IN EPSILON DNA POLYMERASE COMPLEX</scope>
    <source>
        <tissue>Cervix carcinoma</tissue>
    </source>
</reference>
<reference key="6">
    <citation type="journal article" date="2001" name="J. Biol. Chem.">
        <title>BRCT domain-containing protein TopBP1 functions in DNA replication and damage response.</title>
        <authorList>
            <person name="Maekiniemi M."/>
            <person name="Hillukkala T."/>
            <person name="Tuusa J."/>
            <person name="Reini K."/>
            <person name="Vaara M."/>
            <person name="Huang D."/>
            <person name="Pospiech H."/>
            <person name="Majuri I."/>
            <person name="Westerling T."/>
            <person name="Maekelae T.P."/>
            <person name="Syvaeoja J.E."/>
        </authorList>
    </citation>
    <scope>INTERACTION WITH TOPBP1</scope>
</reference>
<reference key="7">
    <citation type="journal article" date="2003" name="Nucleic Acids Res.">
        <title>The human checkpoint Rad protein Rad17 is chromatin-associated throughout the cell cycle, localizes to DNA replication sites, and interacts with DNA polymerase epsilon.</title>
        <authorList>
            <person name="Post S.M."/>
            <person name="Tomkinson A.E."/>
            <person name="Lee E.Y.-H.P."/>
        </authorList>
    </citation>
    <scope>INTERACTION WITH RAD17</scope>
</reference>
<reference key="8">
    <citation type="journal article" date="2007" name="Science">
        <title>ATM and ATR substrate analysis reveals extensive protein networks responsive to DNA damage.</title>
        <authorList>
            <person name="Matsuoka S."/>
            <person name="Ballif B.A."/>
            <person name="Smogorzewska A."/>
            <person name="McDonald E.R. III"/>
            <person name="Hurov K.E."/>
            <person name="Luo J."/>
            <person name="Bakalarski C.E."/>
            <person name="Zhao Z."/>
            <person name="Solimini N."/>
            <person name="Lerenthal Y."/>
            <person name="Shiloh Y."/>
            <person name="Gygi S.P."/>
            <person name="Elledge S.J."/>
        </authorList>
    </citation>
    <scope>PHOSPHORYLATION [LARGE SCALE ANALYSIS] AT SER-1940</scope>
    <scope>IDENTIFICATION BY MASS SPECTROMETRY [LARGE SCALE ANALYSIS]</scope>
    <source>
        <tissue>Embryonic kidney</tissue>
    </source>
</reference>
<reference key="9">
    <citation type="journal article" date="2010" name="Mol. Cell">
        <title>Three DNA polymerases, recruited by different mechanisms, carry out NER repair synthesis in human cells.</title>
        <authorList>
            <person name="Ogi T."/>
            <person name="Limsirichaikul S."/>
            <person name="Overmeer R.M."/>
            <person name="Volker M."/>
            <person name="Takenaka K."/>
            <person name="Cloney R."/>
            <person name="Nakazawa Y."/>
            <person name="Niimi A."/>
            <person name="Miki Y."/>
            <person name="Jaspers N.G."/>
            <person name="Mullenders L.H."/>
            <person name="Yamashita S."/>
            <person name="Fousteri M.I."/>
            <person name="Lehmann A.R."/>
        </authorList>
    </citation>
    <scope>FUNCTION</scope>
</reference>
<reference key="10">
    <citation type="journal article" date="2010" name="Sci. Signal.">
        <title>Quantitative phosphoproteomics reveals widespread full phosphorylation site occupancy during mitosis.</title>
        <authorList>
            <person name="Olsen J.V."/>
            <person name="Vermeulen M."/>
            <person name="Santamaria A."/>
            <person name="Kumar C."/>
            <person name="Miller M.L."/>
            <person name="Jensen L.J."/>
            <person name="Gnad F."/>
            <person name="Cox J."/>
            <person name="Jensen T.S."/>
            <person name="Nigg E.A."/>
            <person name="Brunak S."/>
            <person name="Mann M."/>
        </authorList>
    </citation>
    <scope>PHOSPHORYLATION [LARGE SCALE ANALYSIS] AT SER-1184</scope>
    <scope>IDENTIFICATION BY MASS SPECTROMETRY [LARGE SCALE ANALYSIS]</scope>
    <source>
        <tissue>Cervix carcinoma</tissue>
    </source>
</reference>
<reference key="11">
    <citation type="journal article" date="2011" name="BMC Syst. Biol.">
        <title>Initial characterization of the human central proteome.</title>
        <authorList>
            <person name="Burkard T.R."/>
            <person name="Planyavsky M."/>
            <person name="Kaupe I."/>
            <person name="Breitwieser F.P."/>
            <person name="Buerckstuemmer T."/>
            <person name="Bennett K.L."/>
            <person name="Superti-Furga G."/>
            <person name="Colinge J."/>
        </authorList>
    </citation>
    <scope>IDENTIFICATION BY MASS SPECTROMETRY [LARGE SCALE ANALYSIS]</scope>
</reference>
<reference key="12">
    <citation type="journal article" date="2012" name="J. Exp. Med.">
        <title>Polymerase epsilon1 mutation in a human syndrome with facial dysmorphism, immunodeficiency, livedo, and short stature (FILS syndrome).</title>
        <authorList>
            <person name="Pachlopnik Schmid J."/>
            <person name="Lemoine R."/>
            <person name="Nehme N."/>
            <person name="Cormier-Daire V."/>
            <person name="Revy P."/>
            <person name="Debeurme F."/>
            <person name="Debre M."/>
            <person name="Nitschke P."/>
            <person name="Bole-Feysot C."/>
            <person name="Legeai-Mallet L."/>
            <person name="Lim A."/>
            <person name="de Villartay J.P."/>
            <person name="Picard C."/>
            <person name="Durandy A."/>
            <person name="Fischer A."/>
            <person name="de Saint Basile G."/>
        </authorList>
    </citation>
    <scope>INVOLVEMENT IN FILS</scope>
</reference>
<reference key="13">
    <citation type="journal article" date="2013" name="J. Proteome Res.">
        <title>Toward a comprehensive characterization of a human cancer cell phosphoproteome.</title>
        <authorList>
            <person name="Zhou H."/>
            <person name="Di Palma S."/>
            <person name="Preisinger C."/>
            <person name="Peng M."/>
            <person name="Polat A.N."/>
            <person name="Heck A.J."/>
            <person name="Mohammed S."/>
        </authorList>
    </citation>
    <scope>PHOSPHORYLATION [LARGE SCALE ANALYSIS] AT SER-1297 AND SER-1317</scope>
    <scope>IDENTIFICATION BY MASS SPECTROMETRY [LARGE SCALE ANALYSIS]</scope>
    <source>
        <tissue>Cervix carcinoma</tissue>
        <tissue>Erythroleukemia</tissue>
    </source>
</reference>
<reference evidence="17" key="14">
    <citation type="journal article" date="2021" name="EMBO J.">
        <title>Structure of a human replisome shows the organisation and interactions of a DNA replication machine.</title>
        <authorList>
            <person name="Jones M.L."/>
            <person name="Baris Y."/>
            <person name="Taylor M.R.G."/>
            <person name="Yeeles J.T.P."/>
        </authorList>
    </citation>
    <scope>STRUCTURE BY ELECTRON MICROSCOPY (3.20 ANGSTROMS) IN COMPLEX WITH REPLISOME</scope>
</reference>
<reference evidence="18" key="15">
    <citation type="journal article" date="2021" name="Nature">
        <title>A conserved mechanism for regulating replisome disassembly in eukaryotes.</title>
        <authorList>
            <person name="Jenkyn-Bedford M."/>
            <person name="Jones M.L."/>
            <person name="Baris Y."/>
            <person name="Labib K.P.M."/>
            <person name="Cannone G."/>
            <person name="Yeeles J.T.P."/>
            <person name="Deegan T.D."/>
        </authorList>
    </citation>
    <scope>STRUCTURE BY ELECTRON MICROSCOPY (2.80 ANGSTROMS) IN COMPLEX WITH REPLISOME</scope>
</reference>
<reference key="16">
    <citation type="journal article" date="2013" name="Nat. Genet.">
        <title>Germline mutations affecting the proofreading domains of POLE and POLD1 predispose to colorectal adenomas and carcinomas.</title>
        <authorList>
            <consortium name="CORGI Consortium"/>
            <consortium name="WGS500 Consortium"/>
            <person name="Palles C."/>
            <person name="Cazier J.B."/>
            <person name="Howarth K.M."/>
            <person name="Domingo E."/>
            <person name="Jones A.M."/>
            <person name="Broderick P."/>
            <person name="Kemp Z."/>
            <person name="Spain S.L."/>
            <person name="Guarino Almeida E."/>
            <person name="Salguero I."/>
            <person name="Sherborne A."/>
            <person name="Chubb D."/>
            <person name="Carvajal-Carmona L.G."/>
            <person name="Ma Y."/>
            <person name="Kaur K."/>
            <person name="Dobbins S."/>
            <person name="Barclay E."/>
            <person name="Gorman M."/>
            <person name="Martin L."/>
            <person name="Kovac M.B."/>
            <person name="Humphray S."/>
            <person name="Lucassen A."/>
            <person name="Holmes C.C."/>
            <person name="Bentley D."/>
            <person name="Donnelly P."/>
            <person name="Taylor J."/>
            <person name="Petridis C."/>
            <person name="Roylance R."/>
            <person name="Sawyer E.J."/>
            <person name="Kerr D.J."/>
            <person name="Clark S."/>
            <person name="Grimes J."/>
            <person name="Kearsey S.E."/>
            <person name="Thomas H.J."/>
            <person name="McVean G."/>
            <person name="Houlston R.S."/>
            <person name="Tomlinson I."/>
        </authorList>
    </citation>
    <scope>VARIANTS CRCS12 LEU-411 AND VAL-424</scope>
    <scope>VARIANTS THR-189; HIS-231; HIS-286; SER-367; ARG-436; PHE-459; TRP-762; ASN-777; ASN-1008; VAL-1255; MET-1368; SER-1421; ASN-1752; ASN-2013; THR-2056 AND VAL-2213</scope>
</reference>
<reference key="17">
    <citation type="journal article" date="2014" name="Hum. Mol. Genet.">
        <title>New insights into POLE and POLD1 germline mutations in familial colorectal cancer and polyposis.</title>
        <authorList>
            <person name="Valle L."/>
            <person name="Hernandez-Illan E."/>
            <person name="Bellido F."/>
            <person name="Aiza G."/>
            <person name="Castillejo A."/>
            <person name="Castillejo M.I."/>
            <person name="Navarro M."/>
            <person name="Segui N."/>
            <person name="Vargas G."/>
            <person name="Guarinos C."/>
            <person name="Juarez M."/>
            <person name="Sanjuan X."/>
            <person name="Iglesias S."/>
            <person name="Alenda C."/>
            <person name="Egoavil C."/>
            <person name="Segura A."/>
            <person name="Juan M.J."/>
            <person name="Rodriguez-Soler M."/>
            <person name="Brunet J."/>
            <person name="Gonzalez S."/>
            <person name="Jover R."/>
            <person name="Lazaro C."/>
            <person name="Capella G."/>
            <person name="Pineda M."/>
            <person name="Soto J.L."/>
            <person name="Blanco I."/>
        </authorList>
    </citation>
    <scope>VARIANT CRCS12 VAL-424</scope>
</reference>
<reference key="18">
    <citation type="journal article" date="2015" name="Fam. Cancer">
        <title>A novel POLE mutation associated with cancers of colon, pancreas, ovaries and small intestine.</title>
        <authorList>
            <person name="Hansen M.F."/>
            <person name="Johansen J."/>
            <person name="Bjoernevoll I."/>
            <person name="Sylvander A.E."/>
            <person name="Steinsbekk K.S."/>
            <person name="Saetrom P."/>
            <person name="Sandvik A.K."/>
            <person name="Drabloes F."/>
            <person name="Sjursen W."/>
        </authorList>
    </citation>
    <scope>VARIANT CRCS12 PHE-458</scope>
</reference>
<reference key="19">
    <citation type="journal article" date="2017" name="Fam. Cancer">
        <title>A novel germline POLE mutation causes an early onset cancer prone syndrome mimicking constitutional mismatch repair deficiency.</title>
        <authorList>
            <person name="Wimmer K."/>
            <person name="Beilken A."/>
            <person name="Nustede R."/>
            <person name="Ripperger T."/>
            <person name="Lamottke B."/>
            <person name="Ure B."/>
            <person name="Steinmann D."/>
            <person name="Reineke-Plaass T."/>
            <person name="Lehmann U."/>
            <person name="Zschocke J."/>
            <person name="Valle L."/>
            <person name="Fauth C."/>
            <person name="Kratz C.P."/>
        </authorList>
    </citation>
    <scope>FUNCTION</scope>
    <scope>VARIANT CRCS12 LEU-411</scope>
</reference>
<reference key="20">
    <citation type="journal article" date="2016" name="Oncotarget">
        <title>The somatic POLE P286R mutation defines a unique subclass of colorectal cancer featuring hypermutation, representing a potential genomic biomarker for immunotherapy.</title>
        <authorList>
            <person name="Ahn S.M."/>
            <person name="Ansari A.A."/>
            <person name="Kim J."/>
            <person name="Kim D."/>
            <person name="Chun S.M."/>
            <person name="Kim J."/>
            <person name="Kim T.W."/>
            <person name="Park I."/>
            <person name="Yu C.S."/>
            <person name="Jang S.J."/>
        </authorList>
    </citation>
    <scope>VARIANTS ARG-286; CYS-1382 AND THR-1925</scope>
</reference>
<reference key="21">
    <citation type="journal article" date="2018" name="Am. J. Hum. Genet.">
        <title>DNA polymerase epsilon deficiency causes IMAGe syndrome with variable immunodeficiency.</title>
        <authorList>
            <consortium name="SGP Consortium"/>
            <person name="Logan C.V."/>
            <person name="Murray J.E."/>
            <person name="Parry D.A."/>
            <person name="Robertson A."/>
            <person name="Bellelli R."/>
            <person name="Tarnauskaite Z."/>
            <person name="Challis R."/>
            <person name="Cleal L."/>
            <person name="Borel V."/>
            <person name="Fluteau A."/>
            <person name="Santoyo-Lopez J."/>
            <person name="Aitman T."/>
            <person name="Barroso I."/>
            <person name="Basel D."/>
            <person name="Bicknell L.S."/>
            <person name="Goel H."/>
            <person name="Hu H."/>
            <person name="Huff C."/>
            <person name="Hutchison M."/>
            <person name="Joyce C."/>
            <person name="Knox R."/>
            <person name="Lacroix A.E."/>
            <person name="Langlois S."/>
            <person name="McCandless S."/>
            <person name="McCarrier J."/>
            <person name="Metcalfe K.A."/>
            <person name="Morrissey R."/>
            <person name="Murphy N."/>
            <person name="Netchine I."/>
            <person name="O'Connell S.M."/>
            <person name="Olney A.H."/>
            <person name="Paria N."/>
            <person name="Rosenfeld J.A."/>
            <person name="Sherlock M."/>
            <person name="Syverson E."/>
            <person name="White P.C."/>
            <person name="Wise C."/>
            <person name="Yu Y."/>
            <person name="Zacharin M."/>
            <person name="Banerjee I."/>
            <person name="Reijns M."/>
            <person name="Bober M.B."/>
            <person name="Semple R.K."/>
            <person name="Boulton S.J."/>
            <person name="Rios J.J."/>
            <person name="Jackson A.P."/>
        </authorList>
    </citation>
    <scope>VARIANTS IMAGEI 683-TYR--HIS-2286 DEL; PRO-1007 AND 1980-TRP--HIS-2286 DEL</scope>
    <scope>INVOLVEMENT IN IMAGEI</scope>
</reference>
<dbReference type="EC" id="2.7.7.7" evidence="2"/>
<dbReference type="EC" id="3.1.11.-" evidence="2"/>
<dbReference type="EMBL" id="S60080">
    <property type="protein sequence ID" value="AAA15448.1"/>
    <property type="status" value="ALT_SEQ"/>
    <property type="molecule type" value="mRNA"/>
</dbReference>
<dbReference type="EMBL" id="L09561">
    <property type="protein sequence ID" value="AAC19148.1"/>
    <property type="molecule type" value="mRNA"/>
</dbReference>
<dbReference type="EMBL" id="U49356">
    <property type="protein sequence ID" value="AAA90924.1"/>
    <property type="molecule type" value="mRNA"/>
</dbReference>
<dbReference type="EMBL" id="AY273166">
    <property type="protein sequence ID" value="AAP12650.1"/>
    <property type="molecule type" value="Genomic_DNA"/>
</dbReference>
<dbReference type="CCDS" id="CCDS9278.1"/>
<dbReference type="PIR" id="G02434">
    <property type="entry name" value="G02434"/>
</dbReference>
<dbReference type="RefSeq" id="NP_006222.2">
    <property type="nucleotide sequence ID" value="NM_006231.4"/>
</dbReference>
<dbReference type="PDB" id="5VBN">
    <property type="method" value="X-ray"/>
    <property type="resolution" value="2.35 A"/>
    <property type="chains" value="B/F=2142-2286"/>
</dbReference>
<dbReference type="PDB" id="7PFO">
    <property type="method" value="EM"/>
    <property type="resolution" value="3.20 A"/>
    <property type="chains" value="B=1-2286"/>
</dbReference>
<dbReference type="PDB" id="7PLO">
    <property type="method" value="EM"/>
    <property type="resolution" value="2.80 A"/>
    <property type="chains" value="B=1-2286"/>
</dbReference>
<dbReference type="PDB" id="9B8S">
    <property type="method" value="EM"/>
    <property type="resolution" value="5.01 A"/>
    <property type="chains" value="A=1-2286"/>
</dbReference>
<dbReference type="PDB" id="9B8T">
    <property type="method" value="EM"/>
    <property type="resolution" value="2.95 A"/>
    <property type="chains" value="A=1-2286"/>
</dbReference>
<dbReference type="PDB" id="9F6D">
    <property type="method" value="EM"/>
    <property type="resolution" value="3.60 A"/>
    <property type="chains" value="A=1-1200"/>
</dbReference>
<dbReference type="PDB" id="9F6E">
    <property type="method" value="EM"/>
    <property type="resolution" value="3.74 A"/>
    <property type="chains" value="A=1-1200"/>
</dbReference>
<dbReference type="PDB" id="9F6F">
    <property type="method" value="EM"/>
    <property type="resolution" value="3.75 A"/>
    <property type="chains" value="A=1-1200"/>
</dbReference>
<dbReference type="PDB" id="9F6I">
    <property type="method" value="EM"/>
    <property type="resolution" value="3.30 A"/>
    <property type="chains" value="A=1-1200"/>
</dbReference>
<dbReference type="PDB" id="9F6J">
    <property type="method" value="EM"/>
    <property type="resolution" value="3.90 A"/>
    <property type="chains" value="A=1-1200"/>
</dbReference>
<dbReference type="PDB" id="9F6K">
    <property type="method" value="EM"/>
    <property type="resolution" value="4.20 A"/>
    <property type="chains" value="A=1-1200"/>
</dbReference>
<dbReference type="PDB" id="9F6L">
    <property type="method" value="EM"/>
    <property type="resolution" value="3.90 A"/>
    <property type="chains" value="A=1-1200"/>
</dbReference>
<dbReference type="PDBsum" id="5VBN"/>
<dbReference type="PDBsum" id="7PFO"/>
<dbReference type="PDBsum" id="7PLO"/>
<dbReference type="PDBsum" id="9B8S"/>
<dbReference type="PDBsum" id="9B8T"/>
<dbReference type="PDBsum" id="9F6D"/>
<dbReference type="PDBsum" id="9F6E"/>
<dbReference type="PDBsum" id="9F6F"/>
<dbReference type="PDBsum" id="9F6I"/>
<dbReference type="PDBsum" id="9F6J"/>
<dbReference type="PDBsum" id="9F6K"/>
<dbReference type="PDBsum" id="9F6L"/>
<dbReference type="EMDB" id="EMD-13375"/>
<dbReference type="EMDB" id="EMD-13494"/>
<dbReference type="EMDB" id="EMD-44357"/>
<dbReference type="EMDB" id="EMD-50222"/>
<dbReference type="EMDB" id="EMD-50223"/>
<dbReference type="EMDB" id="EMD-50224"/>
<dbReference type="EMDB" id="EMD-50225"/>
<dbReference type="EMDB" id="EMD-50226"/>
<dbReference type="EMDB" id="EMD-50227"/>
<dbReference type="EMDB" id="EMD-50228"/>
<dbReference type="SMR" id="Q07864"/>
<dbReference type="BioGRID" id="111422">
    <property type="interactions" value="162"/>
</dbReference>
<dbReference type="ComplexPortal" id="CPX-2108">
    <property type="entry name" value="DNA polymerase epsilon complex"/>
</dbReference>
<dbReference type="CORUM" id="Q07864"/>
<dbReference type="DIP" id="DIP-24243N"/>
<dbReference type="FunCoup" id="Q07864">
    <property type="interactions" value="2368"/>
</dbReference>
<dbReference type="IntAct" id="Q07864">
    <property type="interactions" value="56"/>
</dbReference>
<dbReference type="MINT" id="Q07864"/>
<dbReference type="STRING" id="9606.ENSP00000322570"/>
<dbReference type="ChEMBL" id="CHEMBL2363042"/>
<dbReference type="DrugBank" id="DB00242">
    <property type="generic name" value="Cladribine"/>
</dbReference>
<dbReference type="DrugCentral" id="Q07864"/>
<dbReference type="GlyGen" id="Q07864">
    <property type="glycosylation" value="2 sites, 1 O-linked glycan (1 site)"/>
</dbReference>
<dbReference type="iPTMnet" id="Q07864"/>
<dbReference type="MetOSite" id="Q07864"/>
<dbReference type="PhosphoSitePlus" id="Q07864"/>
<dbReference type="SwissPalm" id="Q07864"/>
<dbReference type="BioMuta" id="POLE"/>
<dbReference type="DMDM" id="116241339"/>
<dbReference type="jPOST" id="Q07864"/>
<dbReference type="MassIVE" id="Q07864"/>
<dbReference type="PaxDb" id="9606-ENSP00000322570"/>
<dbReference type="PeptideAtlas" id="Q07864"/>
<dbReference type="ProteomicsDB" id="58543"/>
<dbReference type="Pumba" id="Q07864"/>
<dbReference type="Antibodypedia" id="32096">
    <property type="antibodies" value="184 antibodies from 23 providers"/>
</dbReference>
<dbReference type="CPTC" id="Q07864">
    <property type="antibodies" value="1 antibody"/>
</dbReference>
<dbReference type="DNASU" id="5426"/>
<dbReference type="Ensembl" id="ENST00000320574.10">
    <property type="protein sequence ID" value="ENSP00000322570.5"/>
    <property type="gene ID" value="ENSG00000177084.19"/>
</dbReference>
<dbReference type="GeneID" id="5426"/>
<dbReference type="KEGG" id="hsa:5426"/>
<dbReference type="MANE-Select" id="ENST00000320574.10">
    <property type="protein sequence ID" value="ENSP00000322570.5"/>
    <property type="RefSeq nucleotide sequence ID" value="NM_006231.4"/>
    <property type="RefSeq protein sequence ID" value="NP_006222.2"/>
</dbReference>
<dbReference type="UCSC" id="uc001uks.3">
    <property type="organism name" value="human"/>
</dbReference>
<dbReference type="AGR" id="HGNC:9177"/>
<dbReference type="CTD" id="5426"/>
<dbReference type="DisGeNET" id="5426"/>
<dbReference type="GeneCards" id="POLE"/>
<dbReference type="HGNC" id="HGNC:9177">
    <property type="gene designation" value="POLE"/>
</dbReference>
<dbReference type="HPA" id="ENSG00000177084">
    <property type="expression patterns" value="Low tissue specificity"/>
</dbReference>
<dbReference type="MalaCards" id="POLE"/>
<dbReference type="MIM" id="174762">
    <property type="type" value="gene"/>
</dbReference>
<dbReference type="MIM" id="615083">
    <property type="type" value="phenotype"/>
</dbReference>
<dbReference type="MIM" id="615139">
    <property type="type" value="phenotype"/>
</dbReference>
<dbReference type="MIM" id="618336">
    <property type="type" value="phenotype"/>
</dbReference>
<dbReference type="neXtProt" id="NX_Q07864"/>
<dbReference type="OpenTargets" id="ENSG00000177084"/>
<dbReference type="Orphanet" id="352712">
    <property type="disease" value="Facial dysmorphism-immunodeficiency-livedo-short stature syndrome"/>
</dbReference>
<dbReference type="Orphanet" id="440437">
    <property type="disease" value="Familial colorectal cancer Type X"/>
</dbReference>
<dbReference type="Orphanet" id="85173">
    <property type="disease" value="IMAGe syndrome"/>
</dbReference>
<dbReference type="Orphanet" id="447877">
    <property type="disease" value="Polymerase proofreading-related adenomatous polyposis"/>
</dbReference>
<dbReference type="PharmGKB" id="PA277"/>
<dbReference type="VEuPathDB" id="HostDB:ENSG00000177084"/>
<dbReference type="eggNOG" id="KOG1798">
    <property type="taxonomic scope" value="Eukaryota"/>
</dbReference>
<dbReference type="GeneTree" id="ENSGT00390000010194"/>
<dbReference type="HOGENOM" id="CLU_000556_0_0_1"/>
<dbReference type="InParanoid" id="Q07864"/>
<dbReference type="OMA" id="MLDQCRY"/>
<dbReference type="OrthoDB" id="10060449at2759"/>
<dbReference type="PAN-GO" id="Q07864">
    <property type="GO annotations" value="9 GO annotations based on evolutionary models"/>
</dbReference>
<dbReference type="PhylomeDB" id="Q07864"/>
<dbReference type="TreeFam" id="TF105017"/>
<dbReference type="BRENDA" id="2.7.7.7">
    <property type="organism ID" value="2681"/>
</dbReference>
<dbReference type="PathwayCommons" id="Q07864"/>
<dbReference type="Reactome" id="R-HSA-110314">
    <property type="pathway name" value="Recognition of DNA damage by PCNA-containing replication complex"/>
</dbReference>
<dbReference type="Reactome" id="R-HSA-5651801">
    <property type="pathway name" value="PCNA-Dependent Long Patch Base Excision Repair"/>
</dbReference>
<dbReference type="Reactome" id="R-HSA-5656169">
    <property type="pathway name" value="Termination of translesion DNA synthesis"/>
</dbReference>
<dbReference type="Reactome" id="R-HSA-5685942">
    <property type="pathway name" value="HDR through Homologous Recombination (HRR)"/>
</dbReference>
<dbReference type="Reactome" id="R-HSA-5696397">
    <property type="pathway name" value="Gap-filling DNA repair synthesis and ligation in GG-NER"/>
</dbReference>
<dbReference type="Reactome" id="R-HSA-5696400">
    <property type="pathway name" value="Dual Incision in GG-NER"/>
</dbReference>
<dbReference type="Reactome" id="R-HSA-6782135">
    <property type="pathway name" value="Dual incision in TC-NER"/>
</dbReference>
<dbReference type="Reactome" id="R-HSA-6782210">
    <property type="pathway name" value="Gap-filling DNA repair synthesis and ligation in TC-NER"/>
</dbReference>
<dbReference type="Reactome" id="R-HSA-68952">
    <property type="pathway name" value="DNA replication initiation"/>
</dbReference>
<dbReference type="Reactome" id="R-HSA-68962">
    <property type="pathway name" value="Activation of the pre-replicative complex"/>
</dbReference>
<dbReference type="SignaLink" id="Q07864"/>
<dbReference type="SIGNOR" id="Q07864"/>
<dbReference type="BioGRID-ORCS" id="5426">
    <property type="hits" value="795 hits in 1174 CRISPR screens"/>
</dbReference>
<dbReference type="ChiTaRS" id="POLE">
    <property type="organism name" value="human"/>
</dbReference>
<dbReference type="GeneWiki" id="POLE_(enzyme)"/>
<dbReference type="GenomeRNAi" id="5426"/>
<dbReference type="Pharos" id="Q07864">
    <property type="development level" value="Tclin"/>
</dbReference>
<dbReference type="PRO" id="PR:Q07864"/>
<dbReference type="Proteomes" id="UP000005640">
    <property type="component" value="Chromosome 12"/>
</dbReference>
<dbReference type="RNAct" id="Q07864">
    <property type="molecule type" value="protein"/>
</dbReference>
<dbReference type="Bgee" id="ENSG00000177084">
    <property type="expression patterns" value="Expressed in right hemisphere of cerebellum and 149 other cell types or tissues"/>
</dbReference>
<dbReference type="ExpressionAtlas" id="Q07864">
    <property type="expression patterns" value="baseline and differential"/>
</dbReference>
<dbReference type="GO" id="GO:0008622">
    <property type="term" value="C:epsilon DNA polymerase complex"/>
    <property type="evidence" value="ECO:0000314"/>
    <property type="project" value="UniProtKB"/>
</dbReference>
<dbReference type="GO" id="GO:0005654">
    <property type="term" value="C:nucleoplasm"/>
    <property type="evidence" value="ECO:0000314"/>
    <property type="project" value="HPA"/>
</dbReference>
<dbReference type="GO" id="GO:0005634">
    <property type="term" value="C:nucleus"/>
    <property type="evidence" value="ECO:0000314"/>
    <property type="project" value="UniProtKB"/>
</dbReference>
<dbReference type="GO" id="GO:0005886">
    <property type="term" value="C:plasma membrane"/>
    <property type="evidence" value="ECO:0000314"/>
    <property type="project" value="HPA"/>
</dbReference>
<dbReference type="GO" id="GO:0051539">
    <property type="term" value="F:4 iron, 4 sulfur cluster binding"/>
    <property type="evidence" value="ECO:0007669"/>
    <property type="project" value="UniProtKB-KW"/>
</dbReference>
<dbReference type="GO" id="GO:0003682">
    <property type="term" value="F:chromatin binding"/>
    <property type="evidence" value="ECO:0000314"/>
    <property type="project" value="UniProtKB"/>
</dbReference>
<dbReference type="GO" id="GO:0003677">
    <property type="term" value="F:DNA binding"/>
    <property type="evidence" value="ECO:0000314"/>
    <property type="project" value="UniProtKB"/>
</dbReference>
<dbReference type="GO" id="GO:0003887">
    <property type="term" value="F:DNA-directed DNA polymerase activity"/>
    <property type="evidence" value="ECO:0000315"/>
    <property type="project" value="UniProtKB"/>
</dbReference>
<dbReference type="GO" id="GO:0000166">
    <property type="term" value="F:nucleotide binding"/>
    <property type="evidence" value="ECO:0007669"/>
    <property type="project" value="InterPro"/>
</dbReference>
<dbReference type="GO" id="GO:0008310">
    <property type="term" value="F:single-stranded DNA 3'-5' DNA exonuclease activity"/>
    <property type="evidence" value="ECO:0000318"/>
    <property type="project" value="GO_Central"/>
</dbReference>
<dbReference type="GO" id="GO:0008270">
    <property type="term" value="F:zinc ion binding"/>
    <property type="evidence" value="ECO:0007669"/>
    <property type="project" value="UniProtKB-KW"/>
</dbReference>
<dbReference type="GO" id="GO:0006287">
    <property type="term" value="P:base-excision repair, gap-filling"/>
    <property type="evidence" value="ECO:0000314"/>
    <property type="project" value="UniProtKB"/>
</dbReference>
<dbReference type="GO" id="GO:0006260">
    <property type="term" value="P:DNA replication"/>
    <property type="evidence" value="ECO:0000315"/>
    <property type="project" value="UniProtKB"/>
</dbReference>
<dbReference type="GO" id="GO:0045004">
    <property type="term" value="P:DNA replication proofreading"/>
    <property type="evidence" value="ECO:0000318"/>
    <property type="project" value="GO_Central"/>
</dbReference>
<dbReference type="GO" id="GO:0000731">
    <property type="term" value="P:DNA synthesis involved in DNA repair"/>
    <property type="evidence" value="ECO:0000315"/>
    <property type="project" value="UniProtKB"/>
</dbReference>
<dbReference type="GO" id="GO:0006261">
    <property type="term" value="P:DNA-templated DNA replication"/>
    <property type="evidence" value="ECO:0000314"/>
    <property type="project" value="ComplexPortal"/>
</dbReference>
<dbReference type="GO" id="GO:0048568">
    <property type="term" value="P:embryonic organ development"/>
    <property type="evidence" value="ECO:0007669"/>
    <property type="project" value="Ensembl"/>
</dbReference>
<dbReference type="GO" id="GO:0000082">
    <property type="term" value="P:G1/S transition of mitotic cell cycle"/>
    <property type="evidence" value="ECO:0000315"/>
    <property type="project" value="UniProtKB"/>
</dbReference>
<dbReference type="GO" id="GO:0006272">
    <property type="term" value="P:leading strand elongation"/>
    <property type="evidence" value="ECO:0000318"/>
    <property type="project" value="GO_Central"/>
</dbReference>
<dbReference type="GO" id="GO:0000278">
    <property type="term" value="P:mitotic cell cycle"/>
    <property type="evidence" value="ECO:0000318"/>
    <property type="project" value="GO_Central"/>
</dbReference>
<dbReference type="GO" id="GO:0006297">
    <property type="term" value="P:nucleotide-excision repair, DNA gap filling"/>
    <property type="evidence" value="ECO:0000315"/>
    <property type="project" value="UniProtKB"/>
</dbReference>
<dbReference type="CDD" id="cd05779">
    <property type="entry name" value="DNA_polB_epsilon_exo"/>
    <property type="match status" value="1"/>
</dbReference>
<dbReference type="CDD" id="cd05535">
    <property type="entry name" value="POLBc_epsilon"/>
    <property type="match status" value="1"/>
</dbReference>
<dbReference type="FunFam" id="1.10.132.60:FF:000002">
    <property type="entry name" value="DNA polymerase epsilon catalytic subunit"/>
    <property type="match status" value="1"/>
</dbReference>
<dbReference type="FunFam" id="3.30.420.10:FF:000010">
    <property type="entry name" value="DNA polymerase epsilon catalytic subunit"/>
    <property type="match status" value="1"/>
</dbReference>
<dbReference type="FunFam" id="3.90.1600.10:FF:000006">
    <property type="entry name" value="DNA polymerase epsilon catalytic subunit"/>
    <property type="match status" value="1"/>
</dbReference>
<dbReference type="Gene3D" id="1.10.132.60">
    <property type="entry name" value="DNA polymerase family B, C-terminal domain"/>
    <property type="match status" value="1"/>
</dbReference>
<dbReference type="Gene3D" id="3.30.342.10">
    <property type="entry name" value="DNA Polymerase, chain B, domain 1"/>
    <property type="match status" value="1"/>
</dbReference>
<dbReference type="Gene3D" id="3.90.1600.10">
    <property type="entry name" value="Palm domain of DNA polymerase"/>
    <property type="match status" value="1"/>
</dbReference>
<dbReference type="Gene3D" id="3.30.420.10">
    <property type="entry name" value="Ribonuclease H-like superfamily/Ribonuclease H"/>
    <property type="match status" value="1"/>
</dbReference>
<dbReference type="InterPro" id="IPR006172">
    <property type="entry name" value="DNA-dir_DNA_pol_B"/>
</dbReference>
<dbReference type="InterPro" id="IPR006133">
    <property type="entry name" value="DNA-dir_DNA_pol_B_exonuc"/>
</dbReference>
<dbReference type="InterPro" id="IPR043502">
    <property type="entry name" value="DNA/RNA_pol_sf"/>
</dbReference>
<dbReference type="InterPro" id="IPR042087">
    <property type="entry name" value="DNA_pol_B_thumb"/>
</dbReference>
<dbReference type="InterPro" id="IPR013697">
    <property type="entry name" value="DNA_pol_e_suA_C"/>
</dbReference>
<dbReference type="InterPro" id="IPR023211">
    <property type="entry name" value="DNA_pol_palm_dom_sf"/>
</dbReference>
<dbReference type="InterPro" id="IPR029703">
    <property type="entry name" value="POL2"/>
</dbReference>
<dbReference type="InterPro" id="IPR055191">
    <property type="entry name" value="POL2_thumb"/>
</dbReference>
<dbReference type="InterPro" id="IPR012337">
    <property type="entry name" value="RNaseH-like_sf"/>
</dbReference>
<dbReference type="InterPro" id="IPR036397">
    <property type="entry name" value="RNaseH_sf"/>
</dbReference>
<dbReference type="InterPro" id="IPR054475">
    <property type="entry name" value="Znf-DPOE"/>
</dbReference>
<dbReference type="PANTHER" id="PTHR10670">
    <property type="entry name" value="DNA POLYMERASE EPSILON CATALYTIC SUBUNIT A"/>
    <property type="match status" value="1"/>
</dbReference>
<dbReference type="PANTHER" id="PTHR10670:SF0">
    <property type="entry name" value="DNA POLYMERASE EPSILON CATALYTIC SUBUNIT A"/>
    <property type="match status" value="1"/>
</dbReference>
<dbReference type="Pfam" id="PF03104">
    <property type="entry name" value="DNA_pol_B_exo1"/>
    <property type="match status" value="1"/>
</dbReference>
<dbReference type="Pfam" id="PF08490">
    <property type="entry name" value="DUF1744"/>
    <property type="match status" value="1"/>
</dbReference>
<dbReference type="Pfam" id="PF22634">
    <property type="entry name" value="POL2_thumb"/>
    <property type="match status" value="1"/>
</dbReference>
<dbReference type="Pfam" id="PF22912">
    <property type="entry name" value="zf-DPOE"/>
    <property type="match status" value="1"/>
</dbReference>
<dbReference type="Pfam" id="PF23250">
    <property type="entry name" value="zf_DPOE_2"/>
    <property type="match status" value="1"/>
</dbReference>
<dbReference type="SMART" id="SM01159">
    <property type="entry name" value="DUF1744"/>
    <property type="match status" value="1"/>
</dbReference>
<dbReference type="SMART" id="SM00486">
    <property type="entry name" value="POLBc"/>
    <property type="match status" value="1"/>
</dbReference>
<dbReference type="SUPFAM" id="SSF56672">
    <property type="entry name" value="DNA/RNA polymerases"/>
    <property type="match status" value="1"/>
</dbReference>
<dbReference type="SUPFAM" id="SSF53098">
    <property type="entry name" value="Ribonuclease H-like"/>
    <property type="match status" value="1"/>
</dbReference>
<keyword id="KW-0002">3D-structure</keyword>
<keyword id="KW-0004">4Fe-4S</keyword>
<keyword id="KW-0903">Direct protein sequencing</keyword>
<keyword id="KW-0225">Disease variant</keyword>
<keyword id="KW-0227">DNA damage</keyword>
<keyword id="KW-0234">DNA repair</keyword>
<keyword id="KW-0235">DNA replication</keyword>
<keyword id="KW-0238">DNA-binding</keyword>
<keyword id="KW-0239">DNA-directed DNA polymerase</keyword>
<keyword id="KW-0378">Hydrolase</keyword>
<keyword id="KW-0408">Iron</keyword>
<keyword id="KW-0411">Iron-sulfur</keyword>
<keyword id="KW-0479">Metal-binding</keyword>
<keyword id="KW-0548">Nucleotidyltransferase</keyword>
<keyword id="KW-0539">Nucleus</keyword>
<keyword id="KW-0597">Phosphoprotein</keyword>
<keyword id="KW-1267">Proteomics identification</keyword>
<keyword id="KW-1185">Reference proteome</keyword>
<keyword id="KW-0808">Transferase</keyword>
<keyword id="KW-0862">Zinc</keyword>
<keyword id="KW-0863">Zinc-finger</keyword>
<proteinExistence type="evidence at protein level"/>
<accession>Q07864</accession>
<accession>Q13533</accession>
<accession>Q86VH9</accession>
<protein>
    <recommendedName>
        <fullName>DNA polymerase epsilon catalytic subunit A</fullName>
        <ecNumber evidence="2">2.7.7.7</ecNumber>
    </recommendedName>
    <alternativeName>
        <fullName evidence="15">3'-5' exodeoxyribonuclease</fullName>
        <ecNumber evidence="2">3.1.11.-</ecNumber>
    </alternativeName>
    <alternativeName>
        <fullName>DNA polymerase II subunit A</fullName>
    </alternativeName>
</protein>
<sequence length="2286" mass="261518">MSLRSGGRRRADPGADGEASRDDGATSSVSALKRLERSQWTDKMDLRFGFERLKEPGEKTGWLINMHPTEILDEDKRLGSAVDYYFIQDDGSRFKVALPYKPYFYIATRKGCEREVSSFLSKKFQGKIAKVETVPKEDLDLPNHLVGLKRNYIRLSFHTVEDLVKVRKEISPAVKKNREQDHASDAYTALLSSVLQRGGVITDEEETSKKIADQLDNIVDMREYDVPYHIRLSIDLKIHVAHWYNVRYRGNAFPVEITRRDDLVERPDPVVLAFDIETTKLPLKFPDAETDQIMMISYMIDGQGYLITNREIVSEDIEDFEFTPKPEYEGPFCVFNEPDEAHLIQRWFEHVQETKPTIMVTYNGDFFDWPFVEARAAVHGLSMQQEIGFQKDSQGEYKAPQCIHMDCLRWVKRDSYLPVGSHNLKAAAKAKLGYDPVELDPEDMCRMATEQPQTLATYSVSDAVATYYLYMKYVHPFIFALCTIIPMEPDEVLRKGSGTLCEALLMVQAFHANIIFPNKQEQEFNKLTDDGHVLDSETYVGGHVEALESGVFRSDIPCRFRMNPAAFDFLLQRVEKTLRHALEEEEKVPVEQVTNFEEVCDEIKSKLASLKDVPSRIECPLIYHLDVGAMYPNIILTNRLQPSAMVDEATCAACDFNKPGANCQRKMAWQWRGEFMPASRSEYHRIQHQLESEKFPPLFPEGPARAFHELSREEQAKYEKRRLADYCRKAYKKIHITKVEERLTTICQRENSFYVDTVRAFRDRRYEFKGLHKVWKKKLSAAVEVGDAAEVKRCKNMEVLYDSLQLAHKCILNSFYGYVMRKGARWYSMEMAGIVCFTGANIITQARELIEQIGRPLELDTDGIWCVLPNSFPENFVFKTTNVKKPKVTISYPGAMLNIMVKEGFTNDQYQELAEPSSLTYVTRSENSIFFEVDGPYLAMILPASKEEGKKLKKRYAVFNEDGSLAELKGFEVKRRGELQLIKIFQSSVFEAFLKGSTLEEVYGSVAKVADYWLDVLYSKAANMPDSELFELISENRSMSRKLEDYGEQKSTSISTAKRLAEFLGDQMVKDAGLSCRYIISRKPEGSPVTERAIPLAIFQAEPTVRKHFLRKWLKSSSLQDFDIRAILDWDYYIERLGSAIQKIITIPAALQQVKNPVPRVKHPDWLHKKLLEKNDVYKQKKISELFTLEGRRQVTMAEASEDSPRPSAPDMEDFGLVKLPHPAAPVTVKRKRVLWESQEESQDLTPTVPWQEILGQPPALGTSQEEWLVWLRFHKKKWQLQARQRLARRKRQRLESAEGVLRPGAIRDGPATGLGSFLRRTARSILDLPWQIVQISETSQAGLFRLWALVGSDLHCIRLSIPRVFYVNQRVAKAEEGASYRKVNRVLPRSNMVYNLYEYSVPEDMYQEHINEINAELSAPDIEGVYETQVPLLFRALVHLGCVCVVNKQLVRHLSGWEAETFALEHLEMRSLAQFSYLEPGSIRHIYLYHHAQAHKALFGIFIPSQRRASVFVLDTVRSNQMPSLGALYSAEHGLLLEKVGPELLPPPKHTFEVRAETDLKTICRAIQRFLLAYKEERRGPTLIAVQSSWELKRLASEIPVLEEFPLVPICVADKINYGVLDWQRHGARRMIRHYLNLDTCLSQAFEMSRYFHIPIGNLPEDISTFGSDLFFARHLQRHNHLLWLSPTARPDLGGKEADDNCLVMEFDDQATVEINSSGCYSTVCVELDLQNLAVNTILQSHHVNDMEGADSMGISFDVIQQASLEDMITGGQAASAPASYDETALCSNTFRILKSMVVGWVKEITQYHNIYADNQVMHFYRWLRSPSSLLHDPALHRTLHNMMKKLFLQLIAEFKRLGSSVIYANFNRIILCTKKRRVEDAIAYVEYITSSIHSKETFHSLTISFSRCWEFLLWMDPSNYGGIKGKVSSRIHCGLQDSQKAGGAEDEQENEDDEEERDGEEEEEAEESNVEDLLENNWNILQFLPQAASCQNYFLMIVSAYIVAVYHCMKDGLRRSAPGSTPVRRRGASQLSQEAEGAVGALPGMITFSQDYVANELTQSFFTITQKIQKKVTGSRNSTELSEMFPVLPGSHLLLNNPALEFIKYVCKVLSLDTNITNQVNKLNRDLLRLVDVGEFSEEAQFRDPCRSYVLPEVICRSCNFCRDLDLCKDSSFSEDGAVLPQWLCSNCQAPYDSSAIEMTLVEVLQKKLMAFTLQDLVCLKCRGVKETSMPVYCSCAGDFALTIHTQVFMEQIGIFRNIAQHYGMSYLLETLEWLLQKNPQLGH</sequence>
<feature type="chain" id="PRO_0000046455" description="DNA polymerase epsilon catalytic subunit A">
    <location>
        <begin position="1"/>
        <end position="2286"/>
    </location>
</feature>
<feature type="zinc finger region" description="CysA-type" evidence="1">
    <location>
        <begin position="2158"/>
        <end position="2190"/>
    </location>
</feature>
<feature type="region of interest" description="Disordered" evidence="3">
    <location>
        <begin position="1"/>
        <end position="30"/>
    </location>
</feature>
<feature type="region of interest" description="Disordered" evidence="3">
    <location>
        <begin position="1939"/>
        <end position="1969"/>
    </location>
</feature>
<feature type="short sequence motif" description="CysB motif" evidence="1">
    <location>
        <begin position="2221"/>
        <end position="2238"/>
    </location>
</feature>
<feature type="compositionally biased region" description="Basic and acidic residues" evidence="3">
    <location>
        <begin position="9"/>
        <end position="24"/>
    </location>
</feature>
<feature type="compositionally biased region" description="Acidic residues" evidence="3">
    <location>
        <begin position="1946"/>
        <end position="1969"/>
    </location>
</feature>
<feature type="binding site" evidence="1">
    <location>
        <position position="2158"/>
    </location>
    <ligand>
        <name>Zn(2+)</name>
        <dbReference type="ChEBI" id="CHEBI:29105"/>
    </ligand>
</feature>
<feature type="binding site" evidence="1">
    <location>
        <position position="2161"/>
    </location>
    <ligand>
        <name>Zn(2+)</name>
        <dbReference type="ChEBI" id="CHEBI:29105"/>
    </ligand>
</feature>
<feature type="binding site" evidence="1">
    <location>
        <position position="2187"/>
    </location>
    <ligand>
        <name>Zn(2+)</name>
        <dbReference type="ChEBI" id="CHEBI:29105"/>
    </ligand>
</feature>
<feature type="binding site" evidence="1">
    <location>
        <position position="2190"/>
    </location>
    <ligand>
        <name>Zn(2+)</name>
        <dbReference type="ChEBI" id="CHEBI:29105"/>
    </ligand>
</feature>
<feature type="binding site" evidence="1">
    <location>
        <position position="2221"/>
    </location>
    <ligand>
        <name>[4Fe-4S] cluster</name>
        <dbReference type="ChEBI" id="CHEBI:49883"/>
    </ligand>
</feature>
<feature type="binding site" evidence="1">
    <location>
        <position position="2224"/>
    </location>
    <ligand>
        <name>[4Fe-4S] cluster</name>
        <dbReference type="ChEBI" id="CHEBI:49883"/>
    </ligand>
</feature>
<feature type="binding site" evidence="1">
    <location>
        <position position="2236"/>
    </location>
    <ligand>
        <name>[4Fe-4S] cluster</name>
        <dbReference type="ChEBI" id="CHEBI:49883"/>
    </ligand>
</feature>
<feature type="binding site" evidence="1">
    <location>
        <position position="2238"/>
    </location>
    <ligand>
        <name>[4Fe-4S] cluster</name>
        <dbReference type="ChEBI" id="CHEBI:49883"/>
    </ligand>
</feature>
<feature type="modified residue" description="Phosphoserine" evidence="20">
    <location>
        <position position="1184"/>
    </location>
</feature>
<feature type="modified residue" description="Phosphoserine" evidence="21">
    <location>
        <position position="1297"/>
    </location>
</feature>
<feature type="modified residue" description="Phosphoserine" evidence="21">
    <location>
        <position position="1317"/>
    </location>
</feature>
<feature type="modified residue" description="Phosphoserine" evidence="19">
    <location>
        <position position="1940"/>
    </location>
</feature>
<feature type="sequence variant" id="VAR_061138" description="In dbSNP:rs34047482.">
    <original>A</original>
    <variation>S</variation>
    <location>
        <position position="31"/>
    </location>
</feature>
<feature type="sequence variant" id="VAR_028429" description="In dbSNP:rs5744739.">
    <original>P</original>
    <variation>L</variation>
    <location>
        <position position="99"/>
    </location>
</feature>
<feature type="sequence variant" id="VAR_069339" description="Found in a colorectal sample; somatic mutation." evidence="9">
    <original>A</original>
    <variation>T</variation>
    <location>
        <position position="189"/>
    </location>
</feature>
<feature type="sequence variant" id="VAR_069340" description="Found in a colorectal sample; somatic mutation; dbSNP:rs1060500835." evidence="9">
    <original>R</original>
    <variation>H</variation>
    <location>
        <position position="231"/>
    </location>
</feature>
<feature type="sequence variant" id="VAR_020276" description="In dbSNP:rs5744751.">
    <original>A</original>
    <variation>V</variation>
    <location>
        <position position="252"/>
    </location>
</feature>
<feature type="sequence variant" id="VAR_028430" description="In dbSNP:rs5744752.">
    <original>R</original>
    <variation>Q</variation>
    <location>
        <position position="260"/>
    </location>
</feature>
<feature type="sequence variant" id="VAR_069341" description="Found in a colorectal sample; somatic mutation; dbSNP:rs1057519943." evidence="9">
    <original>P</original>
    <variation>H</variation>
    <location>
        <position position="286"/>
    </location>
</feature>
<feature type="sequence variant" id="VAR_077349" description="Found in a colorectal sample; somatic mutation; dbSNP:rs1057519943." evidence="13">
    <original>P</original>
    <variation>R</variation>
    <location>
        <position position="286"/>
    </location>
</feature>
<feature type="sequence variant" id="VAR_020277" description="In dbSNP:rs5744760.">
    <original>N</original>
    <variation>S</variation>
    <location>
        <position position="336"/>
    </location>
</feature>
<feature type="sequence variant" id="VAR_069342" description="Found in a colorectal sample; somatic mutation." evidence="9">
    <original>F</original>
    <variation>S</variation>
    <location>
        <position position="367"/>
    </location>
</feature>
<feature type="sequence variant" id="VAR_069343" description="In CRCS12; uncertain significance; dbSNP:rs1057519945." evidence="9 12">
    <original>V</original>
    <variation>L</variation>
    <location>
        <position position="411"/>
    </location>
</feature>
<feature type="sequence variant" id="VAR_069344" description="In CRCS12; dbSNP:rs483352909." evidence="9 10">
    <original>L</original>
    <variation>V</variation>
    <location>
        <position position="424"/>
    </location>
</feature>
<feature type="sequence variant" id="VAR_069345" description="Found in a colorectal sample; somatic mutation; dbSNP:rs864622766." evidence="9">
    <original>P</original>
    <variation>R</variation>
    <location>
        <position position="436"/>
    </location>
</feature>
<feature type="sequence variant" id="VAR_077350" description="In CRCS12; uncertain significance; dbSNP:rs2135996937." evidence="11">
    <original>Y</original>
    <variation>F</variation>
    <location>
        <position position="458"/>
    </location>
</feature>
<feature type="sequence variant" id="VAR_069346" description="Found in a colorectal sample; somatic mutation; dbSNP:rs765702675." evidence="9">
    <original>S</original>
    <variation>F</variation>
    <location>
        <position position="459"/>
    </location>
</feature>
<feature type="sequence variant" id="VAR_081996" description="In IMAGEI." evidence="14">
    <location>
        <begin position="683"/>
        <end position="2286"/>
    </location>
</feature>
<feature type="sequence variant" id="VAR_020278" description="In dbSNP:rs5744799.">
    <original>F</original>
    <variation>I</variation>
    <location>
        <position position="695"/>
    </location>
</feature>
<feature type="sequence variant" id="VAR_069347" description="Found in a colorectal sample; somatic mutation; dbSNP:rs1064794759." evidence="9">
    <original>R</original>
    <variation>W</variation>
    <location>
        <position position="762"/>
    </location>
</feature>
<feature type="sequence variant" id="VAR_069348" description="Found in a colorectal sample; somatic mutation." evidence="9">
    <original>K</original>
    <variation>N</variation>
    <location>
        <position position="777"/>
    </location>
</feature>
<feature type="sequence variant" id="VAR_081997" description="In IMAGEI; uncertain significance; dbSNP:rs747692201." evidence="14">
    <original>A</original>
    <variation>P</variation>
    <location>
        <position position="1007"/>
    </location>
</feature>
<feature type="sequence variant" id="VAR_069349" description="Found in a colorectal sample; somatic mutation; dbSNP:rs2138689242." evidence="9">
    <original>K</original>
    <variation>N</variation>
    <location>
        <position position="1008"/>
    </location>
</feature>
<feature type="sequence variant" id="VAR_069350" description="Found in a colorectal sample; somatic mutation; dbSNP:rs745838504." evidence="9">
    <original>L</original>
    <variation>V</variation>
    <location>
        <position position="1255"/>
    </location>
</feature>
<feature type="sequence variant" id="VAR_069351" description="Found in a colorectal sample; somatic mutation; dbSNP:rs770558983." evidence="9">
    <original>V</original>
    <variation>M</variation>
    <location>
        <position position="1368"/>
    </location>
</feature>
<feature type="sequence variant" id="VAR_028431" description="Found in a colorectal sample; somatic mutation; dbSNP:rs5744904." evidence="13">
    <original>R</original>
    <variation>C</variation>
    <location>
        <position position="1382"/>
    </location>
</feature>
<feature type="sequence variant" id="VAR_020279" description="In dbSNP:rs5744933.">
    <original>Y</original>
    <variation>C</variation>
    <location>
        <position position="1395"/>
    </location>
</feature>
<feature type="sequence variant" id="VAR_020280" description="In dbSNP:rs5744934.">
    <original>N</original>
    <variation>S</variation>
    <location>
        <position position="1396"/>
    </location>
</feature>
<feature type="sequence variant" id="VAR_020281" description="In dbSNP:rs5744935.">
    <original>E</original>
    <variation>Q</variation>
    <location>
        <position position="1399"/>
    </location>
</feature>
<feature type="sequence variant" id="VAR_069352" description="In dbSNP:rs2138558999." evidence="9">
    <original>P</original>
    <variation>S</variation>
    <location>
        <position position="1421"/>
    </location>
</feature>
<feature type="sequence variant" id="VAR_028432" description="In dbSNP:rs5744948.">
    <original>E</original>
    <variation>A</variation>
    <location>
        <position position="1577"/>
    </location>
</feature>
<feature type="sequence variant" id="VAR_028433" description="In dbSNP:rs5744950.">
    <original>A</original>
    <variation>V</variation>
    <location>
        <position position="1712"/>
    </location>
</feature>
<feature type="sequence variant" id="VAR_069353" description="Found in a colorectal sample; somatic mutation; dbSNP:rs1335665224." evidence="9">
    <original>D</original>
    <variation>N</variation>
    <location>
        <position position="1752"/>
    </location>
</feature>
<feature type="sequence variant" id="VAR_028434" description="In dbSNP:rs5744971.">
    <original>K</original>
    <variation>R</variation>
    <location>
        <position position="1857"/>
    </location>
</feature>
<feature type="sequence variant" id="VAR_077351" description="Found in a colorectal sample; somatic mutation; dbSNP:rs2138485353." evidence="13">
    <original>I</original>
    <variation>T</variation>
    <location>
        <position position="1925"/>
    </location>
</feature>
<feature type="sequence variant" id="VAR_028435" description="In dbSNP:rs5744991.">
    <original>C</original>
    <variation>Y</variation>
    <location>
        <position position="1935"/>
    </location>
</feature>
<feature type="sequence variant" id="VAR_081998" description="In IMAGEI." evidence="14">
    <location>
        <begin position="1980"/>
        <end position="2286"/>
    </location>
</feature>
<feature type="sequence variant" id="VAR_069354" evidence="9">
    <original>D</original>
    <variation>N</variation>
    <location>
        <position position="2013"/>
    </location>
</feature>
<feature type="sequence variant" id="VAR_020282" description="In dbSNP:rs5745021.">
    <original>A</original>
    <variation>V</variation>
    <location>
        <position position="2040"/>
    </location>
</feature>
<feature type="sequence variant" id="VAR_069355" description="Found in a colorectal sample; somatic mutation; dbSNP:rs58916399." evidence="9">
    <original>A</original>
    <variation>T</variation>
    <location>
        <position position="2056"/>
    </location>
</feature>
<feature type="sequence variant" id="VAR_048881" description="In dbSNP:rs5745066.">
    <original>E</original>
    <variation>K</variation>
    <location>
        <position position="2140"/>
    </location>
</feature>
<feature type="sequence variant" id="VAR_048882" description="In dbSNP:rs5745067.">
    <original>R</original>
    <variation>C</variation>
    <location>
        <position position="2159"/>
    </location>
</feature>
<feature type="sequence variant" id="VAR_020283" description="In dbSNP:rs5745068.">
    <original>R</original>
    <variation>H</variation>
    <location>
        <position position="2165"/>
    </location>
</feature>
<feature type="sequence variant" id="VAR_069356" description="Found in a colorectal sample; somatic mutation." evidence="9">
    <original>A</original>
    <variation>V</variation>
    <location>
        <position position="2213"/>
    </location>
</feature>
<feature type="sequence conflict" description="In Ref. 1; AAA15448/AAC19148." evidence="15" ref="1">
    <original>S</original>
    <variation>T</variation>
    <location>
        <position position="2237"/>
    </location>
</feature>
<feature type="helix" evidence="23">
    <location>
        <begin position="28"/>
        <end position="47"/>
    </location>
</feature>
<feature type="strand" evidence="23">
    <location>
        <begin position="55"/>
        <end position="72"/>
    </location>
</feature>
<feature type="strand" evidence="23">
    <location>
        <begin position="78"/>
        <end position="87"/>
    </location>
</feature>
<feature type="strand" evidence="23">
    <location>
        <begin position="93"/>
        <end position="99"/>
    </location>
</feature>
<feature type="strand" evidence="23">
    <location>
        <begin position="103"/>
        <end position="109"/>
    </location>
</feature>
<feature type="turn" evidence="23">
    <location>
        <begin position="110"/>
        <end position="112"/>
    </location>
</feature>
<feature type="helix" evidence="23">
    <location>
        <begin position="113"/>
        <end position="123"/>
    </location>
</feature>
<feature type="turn" evidence="23">
    <location>
        <begin position="124"/>
        <end position="127"/>
    </location>
</feature>
<feature type="strand" evidence="23">
    <location>
        <begin position="128"/>
        <end position="137"/>
    </location>
</feature>
<feature type="helix" evidence="23">
    <location>
        <begin position="144"/>
        <end position="146"/>
    </location>
</feature>
<feature type="strand" evidence="23">
    <location>
        <begin position="150"/>
        <end position="158"/>
    </location>
</feature>
<feature type="helix" evidence="23">
    <location>
        <begin position="160"/>
        <end position="180"/>
    </location>
</feature>
<feature type="helix" evidence="23">
    <location>
        <begin position="215"/>
        <end position="217"/>
    </location>
</feature>
<feature type="strand" evidence="23">
    <location>
        <begin position="218"/>
        <end position="223"/>
    </location>
</feature>
<feature type="helix" evidence="23">
    <location>
        <begin position="228"/>
        <end position="236"/>
    </location>
</feature>
<feature type="strand" evidence="23">
    <location>
        <begin position="243"/>
        <end position="248"/>
    </location>
</feature>
<feature type="helix" evidence="23">
    <location>
        <begin position="250"/>
        <end position="252"/>
    </location>
</feature>
<feature type="strand" evidence="23">
    <location>
        <begin position="256"/>
        <end position="259"/>
    </location>
</feature>
<feature type="strand" evidence="23">
    <location>
        <begin position="271"/>
        <end position="278"/>
    </location>
</feature>
<feature type="turn" evidence="23">
    <location>
        <begin position="288"/>
        <end position="290"/>
    </location>
</feature>
<feature type="strand" evidence="23">
    <location>
        <begin position="293"/>
        <end position="300"/>
    </location>
</feature>
<feature type="strand" evidence="23">
    <location>
        <begin position="303"/>
        <end position="309"/>
    </location>
</feature>
<feature type="turn" evidence="23">
    <location>
        <begin position="310"/>
        <end position="312"/>
    </location>
</feature>
<feature type="strand" evidence="23">
    <location>
        <begin position="313"/>
        <end position="315"/>
    </location>
</feature>
<feature type="strand" evidence="23">
    <location>
        <begin position="331"/>
        <end position="339"/>
    </location>
</feature>
<feature type="helix" evidence="23">
    <location>
        <begin position="340"/>
        <end position="354"/>
    </location>
</feature>
<feature type="strand" evidence="23">
    <location>
        <begin position="357"/>
        <end position="360"/>
    </location>
</feature>
<feature type="turn" evidence="23">
    <location>
        <begin position="362"/>
        <end position="367"/>
    </location>
</feature>
<feature type="helix" evidence="23">
    <location>
        <begin position="368"/>
        <end position="377"/>
    </location>
</feature>
<feature type="turn" evidence="23">
    <location>
        <begin position="378"/>
        <end position="380"/>
    </location>
</feature>
<feature type="helix" evidence="23">
    <location>
        <begin position="383"/>
        <end position="386"/>
    </location>
</feature>
<feature type="strand" evidence="23">
    <location>
        <begin position="400"/>
        <end position="405"/>
    </location>
</feature>
<feature type="helix" evidence="23">
    <location>
        <begin position="407"/>
        <end position="411"/>
    </location>
</feature>
<feature type="helix" evidence="23">
    <location>
        <begin position="419"/>
        <end position="422"/>
    </location>
</feature>
<feature type="helix" evidence="23">
    <location>
        <begin position="424"/>
        <end position="432"/>
    </location>
</feature>
<feature type="turn" evidence="23">
    <location>
        <begin position="441"/>
        <end position="443"/>
    </location>
</feature>
<feature type="helix" evidence="23">
    <location>
        <begin position="444"/>
        <end position="450"/>
    </location>
</feature>
<feature type="helix" evidence="23">
    <location>
        <begin position="452"/>
        <end position="472"/>
    </location>
</feature>
<feature type="helix" evidence="23">
    <location>
        <begin position="474"/>
        <end position="481"/>
    </location>
</feature>
<feature type="helix" evidence="23">
    <location>
        <begin position="482"/>
        <end position="484"/>
    </location>
</feature>
<feature type="strand" evidence="23">
    <location>
        <begin position="485"/>
        <end position="487"/>
    </location>
</feature>
<feature type="helix" evidence="23">
    <location>
        <begin position="489"/>
        <end position="494"/>
    </location>
</feature>
<feature type="helix" evidence="23">
    <location>
        <begin position="497"/>
        <end position="511"/>
    </location>
</feature>
<feature type="strand" evidence="23">
    <location>
        <begin position="533"/>
        <end position="536"/>
    </location>
</feature>
<feature type="strand" evidence="23">
    <location>
        <begin position="550"/>
        <end position="553"/>
    </location>
</feature>
<feature type="strand" evidence="23">
    <location>
        <begin position="558"/>
        <end position="560"/>
    </location>
</feature>
<feature type="helix" evidence="23">
    <location>
        <begin position="564"/>
        <end position="571"/>
    </location>
</feature>
<feature type="helix" evidence="23">
    <location>
        <begin position="574"/>
        <end position="583"/>
    </location>
</feature>
<feature type="turn" evidence="23">
    <location>
        <begin position="584"/>
        <end position="586"/>
    </location>
</feature>
<feature type="helix" evidence="23">
    <location>
        <begin position="590"/>
        <end position="592"/>
    </location>
</feature>
<feature type="strand" evidence="23">
    <location>
        <begin position="593"/>
        <end position="595"/>
    </location>
</feature>
<feature type="helix" evidence="23">
    <location>
        <begin position="596"/>
        <end position="612"/>
    </location>
</feature>
<feature type="strand" evidence="23">
    <location>
        <begin position="615"/>
        <end position="618"/>
    </location>
</feature>
<feature type="strand" evidence="23">
    <location>
        <begin position="620"/>
        <end position="627"/>
    </location>
</feature>
<feature type="helix" evidence="23">
    <location>
        <begin position="630"/>
        <end position="638"/>
    </location>
</feature>
<feature type="turn" evidence="23">
    <location>
        <begin position="642"/>
        <end position="644"/>
    </location>
</feature>
<feature type="helix" evidence="23">
    <location>
        <begin position="648"/>
        <end position="653"/>
    </location>
</feature>
<feature type="strand" evidence="23">
    <location>
        <begin position="664"/>
        <end position="671"/>
    </location>
</feature>
<feature type="helix" evidence="23">
    <location>
        <begin position="680"/>
        <end position="690"/>
    </location>
</feature>
<feature type="helix" evidence="23">
    <location>
        <begin position="707"/>
        <end position="709"/>
    </location>
</feature>
<feature type="helix" evidence="23">
    <location>
        <begin position="712"/>
        <end position="730"/>
    </location>
</feature>
<feature type="strand" evidence="23">
    <location>
        <begin position="731"/>
        <end position="734"/>
    </location>
</feature>
<feature type="strand" evidence="23">
    <location>
        <begin position="740"/>
        <end position="747"/>
    </location>
</feature>
<feature type="helix" evidence="23">
    <location>
        <begin position="753"/>
        <end position="785"/>
    </location>
</feature>
<feature type="helix" evidence="23">
    <location>
        <begin position="788"/>
        <end position="818"/>
    </location>
</feature>
<feature type="helix" evidence="23">
    <location>
        <begin position="830"/>
        <end position="853"/>
    </location>
</feature>
<feature type="strand" evidence="23">
    <location>
        <begin position="854"/>
        <end position="859"/>
    </location>
</feature>
<feature type="strand" evidence="23">
    <location>
        <begin position="861"/>
        <end position="869"/>
    </location>
</feature>
<feature type="strand" evidence="23">
    <location>
        <begin position="875"/>
        <end position="880"/>
    </location>
</feature>
<feature type="strand" evidence="23">
    <location>
        <begin position="886"/>
        <end position="891"/>
    </location>
</feature>
<feature type="helix" evidence="23">
    <location>
        <begin position="892"/>
        <end position="905"/>
    </location>
</feature>
<feature type="strand" evidence="23">
    <location>
        <begin position="911"/>
        <end position="914"/>
    </location>
</feature>
<feature type="turn" evidence="23">
    <location>
        <begin position="916"/>
        <end position="918"/>
    </location>
</feature>
<feature type="strand" evidence="23">
    <location>
        <begin position="921"/>
        <end position="923"/>
    </location>
</feature>
<feature type="strand" evidence="23">
    <location>
        <begin position="931"/>
        <end position="942"/>
    </location>
</feature>
<feature type="strand" evidence="23">
    <location>
        <begin position="956"/>
        <end position="959"/>
    </location>
</feature>
<feature type="strand" evidence="23">
    <location>
        <begin position="963"/>
        <end position="970"/>
    </location>
</feature>
<feature type="helix" evidence="23">
    <location>
        <begin position="972"/>
        <end position="974"/>
    </location>
</feature>
<feature type="strand" evidence="23">
    <location>
        <begin position="975"/>
        <end position="977"/>
    </location>
</feature>
<feature type="helix" evidence="23">
    <location>
        <begin position="980"/>
        <end position="993"/>
    </location>
</feature>
<feature type="strand" evidence="23">
    <location>
        <begin position="995"/>
        <end position="998"/>
    </location>
</feature>
<feature type="helix" evidence="23">
    <location>
        <begin position="999"/>
        <end position="1018"/>
    </location>
</feature>
<feature type="strand" evidence="23">
    <location>
        <begin position="1021"/>
        <end position="1024"/>
    </location>
</feature>
<feature type="helix" evidence="23">
    <location>
        <begin position="1026"/>
        <end position="1033"/>
    </location>
</feature>
<feature type="helix" evidence="23">
    <location>
        <begin position="1043"/>
        <end position="1046"/>
    </location>
</feature>
<feature type="helix" evidence="23">
    <location>
        <begin position="1052"/>
        <end position="1064"/>
    </location>
</feature>
<feature type="helix" evidence="23">
    <location>
        <begin position="1066"/>
        <end position="1069"/>
    </location>
</feature>
<feature type="strand" evidence="23">
    <location>
        <begin position="1071"/>
        <end position="1073"/>
    </location>
</feature>
<feature type="strand" evidence="23">
    <location>
        <begin position="1078"/>
        <end position="1084"/>
    </location>
</feature>
<feature type="helix" evidence="23">
    <location>
        <begin position="1089"/>
        <end position="1091"/>
    </location>
</feature>
<feature type="strand" evidence="23">
    <location>
        <begin position="1093"/>
        <end position="1095"/>
    </location>
</feature>
<feature type="helix" evidence="23">
    <location>
        <begin position="1096"/>
        <end position="1100"/>
    </location>
</feature>
<feature type="helix" evidence="23">
    <location>
        <begin position="1103"/>
        <end position="1113"/>
    </location>
</feature>
<feature type="helix" evidence="23">
    <location>
        <begin position="1124"/>
        <end position="1127"/>
    </location>
</feature>
<feature type="helix" evidence="23">
    <location>
        <begin position="1130"/>
        <end position="1144"/>
    </location>
</feature>
<feature type="helix" evidence="23">
    <location>
        <begin position="1146"/>
        <end position="1150"/>
    </location>
</feature>
<feature type="turn" evidence="23">
    <location>
        <begin position="1151"/>
        <end position="1153"/>
    </location>
</feature>
<feature type="helix" evidence="23">
    <location>
        <begin position="1165"/>
        <end position="1174"/>
    </location>
</feature>
<feature type="strand" evidence="22">
    <location>
        <begin position="2152"/>
        <end position="2157"/>
    </location>
</feature>
<feature type="turn" evidence="22">
    <location>
        <begin position="2159"/>
        <end position="2161"/>
    </location>
</feature>
<feature type="strand" evidence="22">
    <location>
        <begin position="2164"/>
        <end position="2168"/>
    </location>
</feature>
<feature type="turn" evidence="22">
    <location>
        <begin position="2169"/>
        <end position="2171"/>
    </location>
</feature>
<feature type="strand" evidence="22">
    <location>
        <begin position="2188"/>
        <end position="2190"/>
    </location>
</feature>
<feature type="helix" evidence="22">
    <location>
        <begin position="2196"/>
        <end position="2216"/>
    </location>
</feature>
<feature type="strand" evidence="22">
    <location>
        <begin position="2219"/>
        <end position="2224"/>
    </location>
</feature>
<feature type="strand" evidence="22">
    <location>
        <begin position="2230"/>
        <end position="2232"/>
    </location>
</feature>
<feature type="strand" evidence="22">
    <location>
        <begin position="2237"/>
        <end position="2239"/>
    </location>
</feature>
<feature type="strand" evidence="22">
    <location>
        <begin position="2241"/>
        <end position="2246"/>
    </location>
</feature>
<feature type="helix" evidence="22">
    <location>
        <begin position="2248"/>
        <end position="2265"/>
    </location>
</feature>
<feature type="helix" evidence="22">
    <location>
        <begin position="2268"/>
        <end position="2279"/>
    </location>
</feature>
<evidence type="ECO:0000250" key="1">
    <source>
        <dbReference type="UniProtKB" id="P15436"/>
    </source>
</evidence>
<evidence type="ECO:0000250" key="2">
    <source>
        <dbReference type="UniProtKB" id="P21951"/>
    </source>
</evidence>
<evidence type="ECO:0000256" key="3">
    <source>
        <dbReference type="SAM" id="MobiDB-lite"/>
    </source>
</evidence>
<evidence type="ECO:0000269" key="4">
    <source>
    </source>
</evidence>
<evidence type="ECO:0000269" key="5">
    <source>
    </source>
</evidence>
<evidence type="ECO:0000269" key="6">
    <source>
    </source>
</evidence>
<evidence type="ECO:0000269" key="7">
    <source>
    </source>
</evidence>
<evidence type="ECO:0000269" key="8">
    <source>
    </source>
</evidence>
<evidence type="ECO:0000269" key="9">
    <source>
    </source>
</evidence>
<evidence type="ECO:0000269" key="10">
    <source>
    </source>
</evidence>
<evidence type="ECO:0000269" key="11">
    <source>
    </source>
</evidence>
<evidence type="ECO:0000269" key="12">
    <source>
    </source>
</evidence>
<evidence type="ECO:0000269" key="13">
    <source>
    </source>
</evidence>
<evidence type="ECO:0000269" key="14">
    <source>
    </source>
</evidence>
<evidence type="ECO:0000305" key="15"/>
<evidence type="ECO:0000312" key="16">
    <source>
        <dbReference type="HGNC" id="HGNC:9177"/>
    </source>
</evidence>
<evidence type="ECO:0007744" key="17">
    <source>
        <dbReference type="PDB" id="7PFO"/>
    </source>
</evidence>
<evidence type="ECO:0007744" key="18">
    <source>
        <dbReference type="PDB" id="7PLO"/>
    </source>
</evidence>
<evidence type="ECO:0007744" key="19">
    <source>
    </source>
</evidence>
<evidence type="ECO:0007744" key="20">
    <source>
    </source>
</evidence>
<evidence type="ECO:0007744" key="21">
    <source>
    </source>
</evidence>
<evidence type="ECO:0007829" key="22">
    <source>
        <dbReference type="PDB" id="5VBN"/>
    </source>
</evidence>
<evidence type="ECO:0007829" key="23">
    <source>
        <dbReference type="PDB" id="9F6I"/>
    </source>
</evidence>
<gene>
    <name evidence="16" type="primary">POLE</name>
    <name type="synonym">POLE1</name>
</gene>
<organism>
    <name type="scientific">Homo sapiens</name>
    <name type="common">Human</name>
    <dbReference type="NCBI Taxonomy" id="9606"/>
    <lineage>
        <taxon>Eukaryota</taxon>
        <taxon>Metazoa</taxon>
        <taxon>Chordata</taxon>
        <taxon>Craniata</taxon>
        <taxon>Vertebrata</taxon>
        <taxon>Euteleostomi</taxon>
        <taxon>Mammalia</taxon>
        <taxon>Eutheria</taxon>
        <taxon>Euarchontoglires</taxon>
        <taxon>Primates</taxon>
        <taxon>Haplorrhini</taxon>
        <taxon>Catarrhini</taxon>
        <taxon>Hominidae</taxon>
        <taxon>Homo</taxon>
    </lineage>
</organism>